<keyword id="KW-0445">Lipid transport</keyword>
<keyword id="KW-0446">Lipid-binding</keyword>
<keyword id="KW-0496">Mitochondrion</keyword>
<keyword id="KW-0755">Steroidogenesis</keyword>
<keyword id="KW-0809">Transit peptide</keyword>
<keyword id="KW-0813">Transport</keyword>
<dbReference type="EMBL" id="AB047032">
    <property type="protein sequence ID" value="BAB18779.1"/>
    <property type="molecule type" value="mRNA"/>
</dbReference>
<dbReference type="RefSeq" id="NP_001117674.1">
    <property type="nucleotide sequence ID" value="NM_001124202.1"/>
</dbReference>
<dbReference type="SMR" id="Q9DEB4"/>
<dbReference type="Ensembl" id="ENSOMYT00000083309.2">
    <property type="protein sequence ID" value="ENSOMYP00000076537.1"/>
    <property type="gene ID" value="ENSOMYG00000035407.2"/>
</dbReference>
<dbReference type="GeneID" id="100135806"/>
<dbReference type="KEGG" id="omy:100135806"/>
<dbReference type="CTD" id="6770"/>
<dbReference type="GeneTree" id="ENSGT00940000155477"/>
<dbReference type="OrthoDB" id="74575at2759"/>
<dbReference type="UniPathway" id="UPA00296"/>
<dbReference type="Proteomes" id="UP000694395">
    <property type="component" value="Chromosome 6"/>
</dbReference>
<dbReference type="GO" id="GO:0005739">
    <property type="term" value="C:mitochondrion"/>
    <property type="evidence" value="ECO:0007669"/>
    <property type="project" value="UniProtKB-SubCell"/>
</dbReference>
<dbReference type="GO" id="GO:0015485">
    <property type="term" value="F:cholesterol binding"/>
    <property type="evidence" value="ECO:0007669"/>
    <property type="project" value="InterPro"/>
</dbReference>
<dbReference type="GO" id="GO:0120020">
    <property type="term" value="F:cholesterol transfer activity"/>
    <property type="evidence" value="ECO:0007669"/>
    <property type="project" value="InterPro"/>
</dbReference>
<dbReference type="GO" id="GO:0008203">
    <property type="term" value="P:cholesterol metabolic process"/>
    <property type="evidence" value="ECO:0007669"/>
    <property type="project" value="UniProtKB-UniPathway"/>
</dbReference>
<dbReference type="GO" id="GO:0032367">
    <property type="term" value="P:intracellular cholesterol transport"/>
    <property type="evidence" value="ECO:0007669"/>
    <property type="project" value="TreeGrafter"/>
</dbReference>
<dbReference type="GO" id="GO:0050810">
    <property type="term" value="P:regulation of steroid biosynthetic process"/>
    <property type="evidence" value="ECO:0007669"/>
    <property type="project" value="TreeGrafter"/>
</dbReference>
<dbReference type="GO" id="GO:0006694">
    <property type="term" value="P:steroid biosynthetic process"/>
    <property type="evidence" value="ECO:0007669"/>
    <property type="project" value="UniProtKB-KW"/>
</dbReference>
<dbReference type="CDD" id="cd08905">
    <property type="entry name" value="START_STARD1-like"/>
    <property type="match status" value="1"/>
</dbReference>
<dbReference type="FunFam" id="3.30.530.20:FF:000015">
    <property type="entry name" value="Steroidogenic acute regulatory protein, mitochondrial"/>
    <property type="match status" value="1"/>
</dbReference>
<dbReference type="Gene3D" id="3.30.530.20">
    <property type="match status" value="1"/>
</dbReference>
<dbReference type="InterPro" id="IPR029866">
    <property type="entry name" value="StAR"/>
</dbReference>
<dbReference type="InterPro" id="IPR000799">
    <property type="entry name" value="StAR-like"/>
</dbReference>
<dbReference type="InterPro" id="IPR023393">
    <property type="entry name" value="START-like_dom_sf"/>
</dbReference>
<dbReference type="InterPro" id="IPR002913">
    <property type="entry name" value="START_lipid-bd_dom"/>
</dbReference>
<dbReference type="PANTHER" id="PTHR46489">
    <property type="entry name" value="STEROIDOGENIC ACUTE REGULATORY PROTEIN, MITOCHONDRIAL"/>
    <property type="match status" value="1"/>
</dbReference>
<dbReference type="PANTHER" id="PTHR46489:SF3">
    <property type="entry name" value="STEROIDOGENIC ACUTE REGULATORY PROTEIN, MITOCHONDRIAL"/>
    <property type="match status" value="1"/>
</dbReference>
<dbReference type="Pfam" id="PF01852">
    <property type="entry name" value="START"/>
    <property type="match status" value="1"/>
</dbReference>
<dbReference type="PRINTS" id="PR00978">
    <property type="entry name" value="STARPROTEIN"/>
</dbReference>
<dbReference type="SMART" id="SM00234">
    <property type="entry name" value="START"/>
    <property type="match status" value="1"/>
</dbReference>
<dbReference type="SUPFAM" id="SSF55961">
    <property type="entry name" value="Bet v1-like"/>
    <property type="match status" value="1"/>
</dbReference>
<dbReference type="PROSITE" id="PS50848">
    <property type="entry name" value="START"/>
    <property type="match status" value="1"/>
</dbReference>
<organism>
    <name type="scientific">Oncorhynchus mykiss</name>
    <name type="common">Rainbow trout</name>
    <name type="synonym">Salmo gairdneri</name>
    <dbReference type="NCBI Taxonomy" id="8022"/>
    <lineage>
        <taxon>Eukaryota</taxon>
        <taxon>Metazoa</taxon>
        <taxon>Chordata</taxon>
        <taxon>Craniata</taxon>
        <taxon>Vertebrata</taxon>
        <taxon>Euteleostomi</taxon>
        <taxon>Actinopterygii</taxon>
        <taxon>Neopterygii</taxon>
        <taxon>Teleostei</taxon>
        <taxon>Protacanthopterygii</taxon>
        <taxon>Salmoniformes</taxon>
        <taxon>Salmonidae</taxon>
        <taxon>Salmoninae</taxon>
        <taxon>Oncorhynchus</taxon>
    </lineage>
</organism>
<feature type="transit peptide" description="Mitochondrion" evidence="1">
    <location>
        <begin position="1"/>
        <end position="61"/>
    </location>
</feature>
<feature type="chain" id="PRO_0000033324" description="Steroidogenic acute regulatory protein, mitochondrial">
    <location>
        <begin position="62"/>
        <end position="287"/>
    </location>
</feature>
<feature type="domain" description="START" evidence="5">
    <location>
        <begin position="66"/>
        <end position="279"/>
    </location>
</feature>
<accession>Q9DEB4</accession>
<gene>
    <name type="primary">star</name>
</gene>
<evidence type="ECO:0000250" key="1"/>
<evidence type="ECO:0000250" key="2">
    <source>
        <dbReference type="UniProtKB" id="P49675"/>
    </source>
</evidence>
<evidence type="ECO:0000250" key="3">
    <source>
        <dbReference type="UniProtKB" id="P51557"/>
    </source>
</evidence>
<evidence type="ECO:0000250" key="4">
    <source>
        <dbReference type="UniProtKB" id="P79245"/>
    </source>
</evidence>
<evidence type="ECO:0000255" key="5">
    <source>
        <dbReference type="PROSITE-ProRule" id="PRU00197"/>
    </source>
</evidence>
<sequence length="287" mass="31934">MLPATFKLCAGISYRHMRNMTGLRKNAMVAIHHELNMLAGPNPSSWISHVRRRSSLLSSRIEEEQGYNEAEVSYVKQGEEALQKSISILGDQDGWTTEIIAANGDKVLSKVLPDVGKVFKLEVLLDQRSDNLYVELVGNMEQMGDWNPNVKEVKILQKIGQETMVTHEVSGPTPGNVVGPRDFVSVRCAKRRGSTCFLAGMSTQHPTMPEQRGVVRAENGPTCIVMRPSADDPNKTKFTWLLSIDLKGWIPKTIINKVLSQTQVDFANHLRQRMADNSVSMEMAAAC</sequence>
<proteinExistence type="evidence at transcript level"/>
<comment type="function">
    <text evidence="2">Plays a key role in steroid hormone synthesis by enhancing the metabolism of cholesterol into pregnenolone. Mediates the transfer of cholesterol from the outer mitochondrial membrane to the inner mitochondrial membrane where it is cleaved to pregnenolone (By similarity).</text>
</comment>
<comment type="catalytic activity">
    <reaction evidence="2">
        <text>cholesterol(in) = cholesterol(out)</text>
        <dbReference type="Rhea" id="RHEA:39747"/>
        <dbReference type="ChEBI" id="CHEBI:16113"/>
    </reaction>
</comment>
<comment type="pathway">
    <text evidence="2">Steroid metabolism; cholesterol metabolism.</text>
</comment>
<comment type="subunit">
    <text evidence="4">May interact with TSPO.</text>
</comment>
<comment type="subcellular location">
    <subcellularLocation>
        <location evidence="3">Mitochondrion</location>
    </subcellularLocation>
</comment>
<protein>
    <recommendedName>
        <fullName>Steroidogenic acute regulatory protein, mitochondrial</fullName>
        <shortName>StAR</shortName>
    </recommendedName>
    <alternativeName>
        <fullName>START domain-containing protein 1</fullName>
        <shortName>StARD1</shortName>
    </alternativeName>
</protein>
<reference key="1">
    <citation type="submission" date="2000-08" db="EMBL/GenBank/DDBJ databases">
        <title>Molecular cloning of steroidogenic acute regulatory (StAR) protein cDNA from rainbow trout.</title>
        <authorList>
            <person name="Todo T."/>
            <person name="Kusakabe M."/>
            <person name="McQuillan J."/>
            <person name="Young G."/>
        </authorList>
    </citation>
    <scope>NUCLEOTIDE SEQUENCE [MRNA]</scope>
    <source>
        <tissue>Kidney</tissue>
    </source>
</reference>
<name>STAR_ONCMY</name>